<feature type="chain" id="PRO_1000189869" description="Elongation factor Ts">
    <location>
        <begin position="1"/>
        <end position="307"/>
    </location>
</feature>
<feature type="region of interest" description="Involved in Mg(2+) ion dislocation from EF-Tu" evidence="1">
    <location>
        <begin position="80"/>
        <end position="83"/>
    </location>
</feature>
<reference key="1">
    <citation type="submission" date="2008-10" db="EMBL/GenBank/DDBJ databases">
        <title>Genome sequence of Clostridium botulinum A2 Kyoto.</title>
        <authorList>
            <person name="Shrivastava S."/>
            <person name="Brinkac L.M."/>
            <person name="Brown J.L."/>
            <person name="Bruce D."/>
            <person name="Detter C.C."/>
            <person name="Johnson E.A."/>
            <person name="Munk C.A."/>
            <person name="Smith L.A."/>
            <person name="Smith T.J."/>
            <person name="Sutton G."/>
            <person name="Brettin T.S."/>
        </authorList>
    </citation>
    <scope>NUCLEOTIDE SEQUENCE [LARGE SCALE GENOMIC DNA]</scope>
    <source>
        <strain>Kyoto / Type A2</strain>
    </source>
</reference>
<gene>
    <name evidence="1" type="primary">tsf</name>
    <name type="ordered locus">CLM_2727</name>
</gene>
<evidence type="ECO:0000255" key="1">
    <source>
        <dbReference type="HAMAP-Rule" id="MF_00050"/>
    </source>
</evidence>
<dbReference type="EMBL" id="CP001581">
    <property type="protein sequence ID" value="ACO85612.1"/>
    <property type="molecule type" value="Genomic_DNA"/>
</dbReference>
<dbReference type="RefSeq" id="WP_003384678.1">
    <property type="nucleotide sequence ID" value="NC_012563.1"/>
</dbReference>
<dbReference type="SMR" id="C1FSK4"/>
<dbReference type="GeneID" id="92939185"/>
<dbReference type="KEGG" id="cby:CLM_2727"/>
<dbReference type="eggNOG" id="COG0264">
    <property type="taxonomic scope" value="Bacteria"/>
</dbReference>
<dbReference type="HOGENOM" id="CLU_047155_0_0_9"/>
<dbReference type="Proteomes" id="UP000001374">
    <property type="component" value="Chromosome"/>
</dbReference>
<dbReference type="GO" id="GO:0005737">
    <property type="term" value="C:cytoplasm"/>
    <property type="evidence" value="ECO:0007669"/>
    <property type="project" value="UniProtKB-SubCell"/>
</dbReference>
<dbReference type="GO" id="GO:0003746">
    <property type="term" value="F:translation elongation factor activity"/>
    <property type="evidence" value="ECO:0007669"/>
    <property type="project" value="UniProtKB-UniRule"/>
</dbReference>
<dbReference type="CDD" id="cd14275">
    <property type="entry name" value="UBA_EF-Ts"/>
    <property type="match status" value="1"/>
</dbReference>
<dbReference type="FunFam" id="1.10.286.20:FF:000001">
    <property type="entry name" value="Elongation factor Ts"/>
    <property type="match status" value="1"/>
</dbReference>
<dbReference type="FunFam" id="1.10.8.10:FF:000001">
    <property type="entry name" value="Elongation factor Ts"/>
    <property type="match status" value="1"/>
</dbReference>
<dbReference type="Gene3D" id="1.10.286.20">
    <property type="match status" value="1"/>
</dbReference>
<dbReference type="Gene3D" id="1.10.8.10">
    <property type="entry name" value="DNA helicase RuvA subunit, C-terminal domain"/>
    <property type="match status" value="1"/>
</dbReference>
<dbReference type="Gene3D" id="3.30.479.20">
    <property type="entry name" value="Elongation factor Ts, dimerisation domain"/>
    <property type="match status" value="2"/>
</dbReference>
<dbReference type="HAMAP" id="MF_00050">
    <property type="entry name" value="EF_Ts"/>
    <property type="match status" value="1"/>
</dbReference>
<dbReference type="InterPro" id="IPR036402">
    <property type="entry name" value="EF-Ts_dimer_sf"/>
</dbReference>
<dbReference type="InterPro" id="IPR001816">
    <property type="entry name" value="Transl_elong_EFTs/EF1B"/>
</dbReference>
<dbReference type="InterPro" id="IPR014039">
    <property type="entry name" value="Transl_elong_EFTs/EF1B_dimer"/>
</dbReference>
<dbReference type="InterPro" id="IPR018101">
    <property type="entry name" value="Transl_elong_Ts_CS"/>
</dbReference>
<dbReference type="InterPro" id="IPR009060">
    <property type="entry name" value="UBA-like_sf"/>
</dbReference>
<dbReference type="NCBIfam" id="TIGR00116">
    <property type="entry name" value="tsf"/>
    <property type="match status" value="1"/>
</dbReference>
<dbReference type="PANTHER" id="PTHR11741">
    <property type="entry name" value="ELONGATION FACTOR TS"/>
    <property type="match status" value="1"/>
</dbReference>
<dbReference type="PANTHER" id="PTHR11741:SF0">
    <property type="entry name" value="ELONGATION FACTOR TS, MITOCHONDRIAL"/>
    <property type="match status" value="1"/>
</dbReference>
<dbReference type="Pfam" id="PF00889">
    <property type="entry name" value="EF_TS"/>
    <property type="match status" value="1"/>
</dbReference>
<dbReference type="SUPFAM" id="SSF54713">
    <property type="entry name" value="Elongation factor Ts (EF-Ts), dimerisation domain"/>
    <property type="match status" value="2"/>
</dbReference>
<dbReference type="SUPFAM" id="SSF46934">
    <property type="entry name" value="UBA-like"/>
    <property type="match status" value="1"/>
</dbReference>
<dbReference type="PROSITE" id="PS01126">
    <property type="entry name" value="EF_TS_1"/>
    <property type="match status" value="1"/>
</dbReference>
<accession>C1FSK4</accession>
<name>EFTS_CLOBJ</name>
<keyword id="KW-0963">Cytoplasm</keyword>
<keyword id="KW-0251">Elongation factor</keyword>
<keyword id="KW-0648">Protein biosynthesis</keyword>
<organism>
    <name type="scientific">Clostridium botulinum (strain Kyoto / Type A2)</name>
    <dbReference type="NCBI Taxonomy" id="536232"/>
    <lineage>
        <taxon>Bacteria</taxon>
        <taxon>Bacillati</taxon>
        <taxon>Bacillota</taxon>
        <taxon>Clostridia</taxon>
        <taxon>Eubacteriales</taxon>
        <taxon>Clostridiaceae</taxon>
        <taxon>Clostridium</taxon>
    </lineage>
</organism>
<sequence>MISAKMVKDLREKTGAGMMDCKKALTECDGDLEKAVEVLREKGLAAAAKKSGRVAAEGIVSTYISEDMKNGSIVEFNCETDFVSVNELFVELANNLSKQAAFSNVSTAEELLEEKYIADESKLVKDVITELIAKLGENMNLRRIAKLSVDKGVITSYIHGGGRIGVLVKLACEKEDAKLAEIAKDVAMQVAATNPLFLNRDGVDTDTLEKEKEIYRVQALNEGKPEKVVEKMVMGRINKYYKENCLVEQLWVKNGDYTITKYLQEQSKEIGADITVEAFVRYEKGEGIEKKEEDFAEEVQRQMNQGK</sequence>
<protein>
    <recommendedName>
        <fullName evidence="1">Elongation factor Ts</fullName>
        <shortName evidence="1">EF-Ts</shortName>
    </recommendedName>
</protein>
<comment type="function">
    <text evidence="1">Associates with the EF-Tu.GDP complex and induces the exchange of GDP to GTP. It remains bound to the aminoacyl-tRNA.EF-Tu.GTP complex up to the GTP hydrolysis stage on the ribosome.</text>
</comment>
<comment type="subcellular location">
    <subcellularLocation>
        <location evidence="1">Cytoplasm</location>
    </subcellularLocation>
</comment>
<comment type="similarity">
    <text evidence="1">Belongs to the EF-Ts family.</text>
</comment>
<proteinExistence type="inferred from homology"/>